<protein>
    <recommendedName>
        <fullName>Endogenous retrovirus group K member 21 Gag polyprotein</fullName>
    </recommendedName>
    <alternativeName>
        <fullName>HERV-K_12q14.1 provirus ancestral Gag polyprotein</fullName>
        <shortName>Gag polyprotein</shortName>
    </alternativeName>
</protein>
<reference key="1">
    <citation type="journal article" date="2006" name="Nature">
        <title>The finished DNA sequence of human chromosome 12.</title>
        <authorList>
            <person name="Scherer S.E."/>
            <person name="Muzny D.M."/>
            <person name="Buhay C.J."/>
            <person name="Chen R."/>
            <person name="Cree A."/>
            <person name="Ding Y."/>
            <person name="Dugan-Rocha S."/>
            <person name="Gill R."/>
            <person name="Gunaratne P."/>
            <person name="Harris R.A."/>
            <person name="Hawes A.C."/>
            <person name="Hernandez J."/>
            <person name="Hodgson A.V."/>
            <person name="Hume J."/>
            <person name="Jackson A."/>
            <person name="Khan Z.M."/>
            <person name="Kovar-Smith C."/>
            <person name="Lewis L.R."/>
            <person name="Lozado R.J."/>
            <person name="Metzker M.L."/>
            <person name="Milosavljevic A."/>
            <person name="Miner G.R."/>
            <person name="Montgomery K.T."/>
            <person name="Morgan M.B."/>
            <person name="Nazareth L.V."/>
            <person name="Scott G."/>
            <person name="Sodergren E."/>
            <person name="Song X.-Z."/>
            <person name="Steffen D."/>
            <person name="Lovering R.C."/>
            <person name="Wheeler D.A."/>
            <person name="Worley K.C."/>
            <person name="Yuan Y."/>
            <person name="Zhang Z."/>
            <person name="Adams C.Q."/>
            <person name="Ansari-Lari M.A."/>
            <person name="Ayele M."/>
            <person name="Brown M.J."/>
            <person name="Chen G."/>
            <person name="Chen Z."/>
            <person name="Clerc-Blankenburg K.P."/>
            <person name="Davis C."/>
            <person name="Delgado O."/>
            <person name="Dinh H.H."/>
            <person name="Draper H."/>
            <person name="Gonzalez-Garay M.L."/>
            <person name="Havlak P."/>
            <person name="Jackson L.R."/>
            <person name="Jacob L.S."/>
            <person name="Kelly S.H."/>
            <person name="Li L."/>
            <person name="Li Z."/>
            <person name="Liu J."/>
            <person name="Liu W."/>
            <person name="Lu J."/>
            <person name="Maheshwari M."/>
            <person name="Nguyen B.-V."/>
            <person name="Okwuonu G.O."/>
            <person name="Pasternak S."/>
            <person name="Perez L.M."/>
            <person name="Plopper F.J.H."/>
            <person name="Santibanez J."/>
            <person name="Shen H."/>
            <person name="Tabor P.E."/>
            <person name="Verduzco D."/>
            <person name="Waldron L."/>
            <person name="Wang Q."/>
            <person name="Williams G.A."/>
            <person name="Zhang J."/>
            <person name="Zhou J."/>
            <person name="Allen C.C."/>
            <person name="Amin A.G."/>
            <person name="Anyalebechi V."/>
            <person name="Bailey M."/>
            <person name="Barbaria J.A."/>
            <person name="Bimage K.E."/>
            <person name="Bryant N.P."/>
            <person name="Burch P.E."/>
            <person name="Burkett C.E."/>
            <person name="Burrell K.L."/>
            <person name="Calderon E."/>
            <person name="Cardenas V."/>
            <person name="Carter K."/>
            <person name="Casias K."/>
            <person name="Cavazos I."/>
            <person name="Cavazos S.R."/>
            <person name="Ceasar H."/>
            <person name="Chacko J."/>
            <person name="Chan S.N."/>
            <person name="Chavez D."/>
            <person name="Christopoulos C."/>
            <person name="Chu J."/>
            <person name="Cockrell R."/>
            <person name="Cox C.D."/>
            <person name="Dang M."/>
            <person name="Dathorne S.R."/>
            <person name="David R."/>
            <person name="Davis C.M."/>
            <person name="Davy-Carroll L."/>
            <person name="Deshazo D.R."/>
            <person name="Donlin J.E."/>
            <person name="D'Souza L."/>
            <person name="Eaves K.A."/>
            <person name="Egan A."/>
            <person name="Emery-Cohen A.J."/>
            <person name="Escotto M."/>
            <person name="Flagg N."/>
            <person name="Forbes L.D."/>
            <person name="Gabisi A.M."/>
            <person name="Garza M."/>
            <person name="Hamilton C."/>
            <person name="Henderson N."/>
            <person name="Hernandez O."/>
            <person name="Hines S."/>
            <person name="Hogues M.E."/>
            <person name="Huang M."/>
            <person name="Idlebird D.G."/>
            <person name="Johnson R."/>
            <person name="Jolivet A."/>
            <person name="Jones S."/>
            <person name="Kagan R."/>
            <person name="King L.M."/>
            <person name="Leal B."/>
            <person name="Lebow H."/>
            <person name="Lee S."/>
            <person name="LeVan J.M."/>
            <person name="Lewis L.C."/>
            <person name="London P."/>
            <person name="Lorensuhewa L.M."/>
            <person name="Loulseged H."/>
            <person name="Lovett D.A."/>
            <person name="Lucier A."/>
            <person name="Lucier R.L."/>
            <person name="Ma J."/>
            <person name="Madu R.C."/>
            <person name="Mapua P."/>
            <person name="Martindale A.D."/>
            <person name="Martinez E."/>
            <person name="Massey E."/>
            <person name="Mawhiney S."/>
            <person name="Meador M.G."/>
            <person name="Mendez S."/>
            <person name="Mercado C."/>
            <person name="Mercado I.C."/>
            <person name="Merritt C.E."/>
            <person name="Miner Z.L."/>
            <person name="Minja E."/>
            <person name="Mitchell T."/>
            <person name="Mohabbat F."/>
            <person name="Mohabbat K."/>
            <person name="Montgomery B."/>
            <person name="Moore N."/>
            <person name="Morris S."/>
            <person name="Munidasa M."/>
            <person name="Ngo R.N."/>
            <person name="Nguyen N.B."/>
            <person name="Nickerson E."/>
            <person name="Nwaokelemeh O.O."/>
            <person name="Nwokenkwo S."/>
            <person name="Obregon M."/>
            <person name="Oguh M."/>
            <person name="Oragunye N."/>
            <person name="Oviedo R.J."/>
            <person name="Parish B.J."/>
            <person name="Parker D.N."/>
            <person name="Parrish J."/>
            <person name="Parks K.L."/>
            <person name="Paul H.A."/>
            <person name="Payton B.A."/>
            <person name="Perez A."/>
            <person name="Perrin W."/>
            <person name="Pickens A."/>
            <person name="Primus E.L."/>
            <person name="Pu L.-L."/>
            <person name="Puazo M."/>
            <person name="Quiles M.M."/>
            <person name="Quiroz J.B."/>
            <person name="Rabata D."/>
            <person name="Reeves K."/>
            <person name="Ruiz S.J."/>
            <person name="Shao H."/>
            <person name="Sisson I."/>
            <person name="Sonaike T."/>
            <person name="Sorelle R.P."/>
            <person name="Sutton A.E."/>
            <person name="Svatek A.F."/>
            <person name="Svetz L.A."/>
            <person name="Tamerisa K.S."/>
            <person name="Taylor T.R."/>
            <person name="Teague B."/>
            <person name="Thomas N."/>
            <person name="Thorn R.D."/>
            <person name="Trejos Z.Y."/>
            <person name="Trevino B.K."/>
            <person name="Ukegbu O.N."/>
            <person name="Urban J.B."/>
            <person name="Vasquez L.I."/>
            <person name="Vera V.A."/>
            <person name="Villasana D.M."/>
            <person name="Wang L."/>
            <person name="Ward-Moore S."/>
            <person name="Warren J.T."/>
            <person name="Wei X."/>
            <person name="White F."/>
            <person name="Williamson A.L."/>
            <person name="Wleczyk R."/>
            <person name="Wooden H.S."/>
            <person name="Wooden S.H."/>
            <person name="Yen J."/>
            <person name="Yoon L."/>
            <person name="Yoon V."/>
            <person name="Zorrilla S.E."/>
            <person name="Nelson D."/>
            <person name="Kucherlapati R."/>
            <person name="Weinstock G."/>
            <person name="Gibbs R.A."/>
        </authorList>
    </citation>
    <scope>NUCLEOTIDE SEQUENCE [LARGE SCALE GENOMIC DNA]</scope>
</reference>
<reference key="2">
    <citation type="journal article" date="1995" name="J. Virol.">
        <title>Human endogenous retrovirus K10: expression of Gag protein and detection of antibodies in patients with seminomas.</title>
        <authorList>
            <person name="Sauter M."/>
            <person name="Schommer S."/>
            <person name="Kremmer E."/>
            <person name="Remberger K."/>
            <person name="Doelken G."/>
            <person name="Lemm I."/>
            <person name="Buck M."/>
            <person name="Best B."/>
            <person name="Neumann-Haefelin D."/>
            <person name="Mueller-Lantzsch N."/>
        </authorList>
    </citation>
    <scope>CHARACTERIZATION</scope>
</reference>
<evidence type="ECO:0000250" key="1"/>
<evidence type="ECO:0000255" key="2"/>
<evidence type="ECO:0000255" key="3">
    <source>
        <dbReference type="PROSITE-ProRule" id="PRU00047"/>
    </source>
</evidence>
<evidence type="ECO:0000256" key="4">
    <source>
        <dbReference type="SAM" id="MobiDB-lite"/>
    </source>
</evidence>
<evidence type="ECO:0000305" key="5"/>
<organism>
    <name type="scientific">Homo sapiens</name>
    <name type="common">Human</name>
    <dbReference type="NCBI Taxonomy" id="9606"/>
    <lineage>
        <taxon>Eukaryota</taxon>
        <taxon>Metazoa</taxon>
        <taxon>Chordata</taxon>
        <taxon>Craniata</taxon>
        <taxon>Vertebrata</taxon>
        <taxon>Euteleostomi</taxon>
        <taxon>Mammalia</taxon>
        <taxon>Eutheria</taxon>
        <taxon>Euarchontoglires</taxon>
        <taxon>Primates</taxon>
        <taxon>Haplorrhini</taxon>
        <taxon>Catarrhini</taxon>
        <taxon>Hominidae</taxon>
        <taxon>Homo</taxon>
    </lineage>
</organism>
<proteinExistence type="evidence at protein level"/>
<accession>P62683</accession>
<name>GAK21_HUMAN</name>
<gene>
    <name type="primary">ERVK-21</name>
</gene>
<keyword id="KW-1003">Cell membrane</keyword>
<keyword id="KW-0895">ERV</keyword>
<keyword id="KW-0449">Lipoprotein</keyword>
<keyword id="KW-0472">Membrane</keyword>
<keyword id="KW-0479">Metal-binding</keyword>
<keyword id="KW-0519">Myristate</keyword>
<keyword id="KW-1185">Reference proteome</keyword>
<keyword id="KW-0677">Repeat</keyword>
<keyword id="KW-0688">Ribosomal frameshifting</keyword>
<keyword id="KW-0814">Transposable element</keyword>
<keyword id="KW-0862">Zinc</keyword>
<keyword id="KW-0863">Zinc-finger</keyword>
<sequence length="666" mass="74000">MGQTKSKIKSKYASYLSFIKILLKRGGVKVSTKNLIKLFQIIEQFCPWFPEQGTLDLKDWKRIGKELKQAGRKGNIIPLTVWNDWAIIKAALEPFQTEEDSISVSDAPGSCIIDCNENTRKKSQKETEGLHCEYAAEPVMAQSTQNVDYNQLQEVIYPETLKLEGKGPELVGPSESKPRGTSPLPAGQVPVTLQPQTQVKENKTQPPVAYQYWPPAELQYRPPPESQYGYPGMPPAPQGRAPYPQPPTRRLNPTAPPSRQGSELHEIIDKSRKEGDTEAWQFPVMLEPMPPGEGAQEGEPPTVEARYKSFSIKMLKDMKEGVKQYGPNSPYMRTLLDSIAHGHRLIPYDWEILAKSSLLPSQFLQFKTWWIDGVQEQVQRNRAANPPVNIDADQLLGIGQNWSTISQQALMQNEAIEQVRAICLRAWEKIQDPGSTCPSFNTVRQSSKEPYPDFVARLQDVAQKSIADEKARKVIVELMAYENANPECQSAIKPLKGKVPAGSDVISEYVKACDGIGGAMHKAMLMAQAITGVVLGGQVRTFGGKCYNCGQIGHLKKNCPVLNKQNITIQATTTGREPPDLCPRCKKGKHWASQCRSKFDKNGQPLSGNEQRGQPQAPQQTGAFPIQPFVPQGFQGQQPPLSQVFQGISQLPQYNNCPPPQAAVQQ</sequence>
<comment type="function">
    <text>The products of the Gag polyproteins of infectious retroviruses perform highly complex orchestrated tasks during the assembly, budding, maturation, and infection stages of the viral replication cycle. During viral assembly, the proteins form membrane associations and self-associations that ultimately result in budding of an immature virion from the infected cell. Gag precursors also function during viral assembly to selectively bind and package two plus strands of genomic RNA. Endogenous Gag proteins may have kept, lost or modified their original function during evolution.</text>
</comment>
<comment type="subcellular location">
    <subcellularLocation>
        <location>Cell membrane</location>
        <topology>Lipid-anchor</topology>
    </subcellularLocation>
    <text evidence="1">Cytoplasmic membrane (in a transfection system).</text>
</comment>
<comment type="alternative products">
    <event type="ribosomal frameshifting"/>
    <isoform>
        <id>P62683-1</id>
        <name>1</name>
        <sequence type="displayed"/>
    </isoform>
    <text>This protein is synthesized as a Gag polypeptide and as a Gag-Pro-Pol polyprotein. The later is the precursor of the Pro and Pol proteins. It is thought, by similarity with type-B retroviruses, to be generated by -1 frameshifts occurring at the Gag-Pro and Pro-Pol genes boundaries.</text>
</comment>
<comment type="domain">
    <text>HERV-K Gag polyprotein contains regions homologous to the matrix (MA), capsid (CA) and nucleocapsid (NC) proteins from infectious retroviruses. Evidence suggests that HERV-K(HML-2) Gag polyprotein can be cleaved into mature MA, CA and NC under certain circumstances. However, the exact boundaries as well as the size of processed Gag proteins have not been precisely determined yet.</text>
</comment>
<comment type="PTM">
    <text evidence="1">Myristoylation is essential for retroviral assembly. Alteration of the glycine residue leads to a block in the budding of particles and an accumulation of Gag inside the cell (By similarity).</text>
</comment>
<comment type="PTM">
    <text evidence="5">Specific enzymatic cleavages may yield mature proteins.</text>
</comment>
<comment type="similarity">
    <text evidence="5">Belongs to the beta type-B retroviral Gag protein family. HERV class-II K(HML-2) gag subfamily.</text>
</comment>
<dbReference type="EMBL" id="AC025420">
    <property type="status" value="NOT_ANNOTATED_CDS"/>
    <property type="molecule type" value="Genomic_DNA"/>
</dbReference>
<dbReference type="SMR" id="P62683"/>
<dbReference type="BioMuta" id="HGNC:39035"/>
<dbReference type="DMDM" id="50400277"/>
<dbReference type="jPOST" id="P62683"/>
<dbReference type="MassIVE" id="P62683"/>
<dbReference type="PeptideAtlas" id="P62683"/>
<dbReference type="GeneCards" id="ERVK-21"/>
<dbReference type="HGNC" id="HGNC:39035">
    <property type="gene designation" value="ERVK-21"/>
</dbReference>
<dbReference type="neXtProt" id="NX_P62683"/>
<dbReference type="PhylomeDB" id="P62683"/>
<dbReference type="Pharos" id="P62683">
    <property type="development level" value="Tdark"/>
</dbReference>
<dbReference type="Proteomes" id="UP000005640">
    <property type="component" value="Unplaced"/>
</dbReference>
<dbReference type="GO" id="GO:0005886">
    <property type="term" value="C:plasma membrane"/>
    <property type="evidence" value="ECO:0007669"/>
    <property type="project" value="UniProtKB-SubCell"/>
</dbReference>
<dbReference type="GO" id="GO:0003676">
    <property type="term" value="F:nucleic acid binding"/>
    <property type="evidence" value="ECO:0007669"/>
    <property type="project" value="InterPro"/>
</dbReference>
<dbReference type="GO" id="GO:0005198">
    <property type="term" value="F:structural molecule activity"/>
    <property type="evidence" value="ECO:0007669"/>
    <property type="project" value="InterPro"/>
</dbReference>
<dbReference type="GO" id="GO:0008270">
    <property type="term" value="F:zinc ion binding"/>
    <property type="evidence" value="ECO:0007669"/>
    <property type="project" value="UniProtKB-KW"/>
</dbReference>
<dbReference type="GO" id="GO:0075523">
    <property type="term" value="P:viral translational frameshifting"/>
    <property type="evidence" value="ECO:0007669"/>
    <property type="project" value="UniProtKB-KW"/>
</dbReference>
<dbReference type="Gene3D" id="1.10.1200.30">
    <property type="match status" value="1"/>
</dbReference>
<dbReference type="Gene3D" id="1.10.375.10">
    <property type="entry name" value="Human Immunodeficiency Virus Type 1 Capsid Protein"/>
    <property type="match status" value="1"/>
</dbReference>
<dbReference type="Gene3D" id="1.10.150.490">
    <property type="entry name" value="Retroviral GAG p10 protein"/>
    <property type="match status" value="1"/>
</dbReference>
<dbReference type="Gene3D" id="4.10.60.10">
    <property type="entry name" value="Zinc finger, CCHC-type"/>
    <property type="match status" value="1"/>
</dbReference>
<dbReference type="InterPro" id="IPR003322">
    <property type="entry name" value="B_retro_matrix"/>
</dbReference>
<dbReference type="InterPro" id="IPR038124">
    <property type="entry name" value="B_retro_matrix_sf"/>
</dbReference>
<dbReference type="InterPro" id="IPR045345">
    <property type="entry name" value="Gag_p24_C"/>
</dbReference>
<dbReference type="InterPro" id="IPR050195">
    <property type="entry name" value="Primate_lentivir_Gag_pol-like"/>
</dbReference>
<dbReference type="InterPro" id="IPR008916">
    <property type="entry name" value="Retrov_capsid_C"/>
</dbReference>
<dbReference type="InterPro" id="IPR008919">
    <property type="entry name" value="Retrov_capsid_N"/>
</dbReference>
<dbReference type="InterPro" id="IPR010999">
    <property type="entry name" value="Retrovr_matrix"/>
</dbReference>
<dbReference type="InterPro" id="IPR001878">
    <property type="entry name" value="Znf_CCHC"/>
</dbReference>
<dbReference type="InterPro" id="IPR036875">
    <property type="entry name" value="Znf_CCHC_sf"/>
</dbReference>
<dbReference type="PANTHER" id="PTHR40389">
    <property type="entry name" value="ENDOGENOUS RETROVIRUS GROUP K MEMBER 24 GAG POLYPROTEIN-RELATED"/>
    <property type="match status" value="1"/>
</dbReference>
<dbReference type="PANTHER" id="PTHR40389:SF2">
    <property type="entry name" value="ENDOGENOUS RETROVIRUS GROUP K MEMBER 24 GAG POLYPROTEIN-RELATED"/>
    <property type="match status" value="1"/>
</dbReference>
<dbReference type="Pfam" id="PF02337">
    <property type="entry name" value="Gag_p10"/>
    <property type="match status" value="1"/>
</dbReference>
<dbReference type="Pfam" id="PF00607">
    <property type="entry name" value="Gag_p24"/>
    <property type="match status" value="1"/>
</dbReference>
<dbReference type="Pfam" id="PF19317">
    <property type="entry name" value="Gag_p24_C"/>
    <property type="match status" value="1"/>
</dbReference>
<dbReference type="Pfam" id="PF00098">
    <property type="entry name" value="zf-CCHC"/>
    <property type="match status" value="1"/>
</dbReference>
<dbReference type="Pfam" id="PF14787">
    <property type="entry name" value="zf-CCHC_5"/>
    <property type="match status" value="1"/>
</dbReference>
<dbReference type="SMART" id="SM00343">
    <property type="entry name" value="ZnF_C2HC"/>
    <property type="match status" value="2"/>
</dbReference>
<dbReference type="SUPFAM" id="SSF47836">
    <property type="entry name" value="Retroviral matrix proteins"/>
    <property type="match status" value="1"/>
</dbReference>
<dbReference type="SUPFAM" id="SSF47353">
    <property type="entry name" value="Retrovirus capsid dimerization domain-like"/>
    <property type="match status" value="1"/>
</dbReference>
<dbReference type="SUPFAM" id="SSF47943">
    <property type="entry name" value="Retrovirus capsid protein, N-terminal core domain"/>
    <property type="match status" value="1"/>
</dbReference>
<dbReference type="SUPFAM" id="SSF57756">
    <property type="entry name" value="Retrovirus zinc finger-like domains"/>
    <property type="match status" value="2"/>
</dbReference>
<dbReference type="PROSITE" id="PS50158">
    <property type="entry name" value="ZF_CCHC"/>
    <property type="match status" value="1"/>
</dbReference>
<feature type="initiator methionine" description="Removed" evidence="2">
    <location>
        <position position="1"/>
    </location>
</feature>
<feature type="chain" id="PRO_0000186744" description="Endogenous retrovirus group K member 21 Gag polyprotein">
    <location>
        <begin position="2"/>
        <end position="666"/>
    </location>
</feature>
<feature type="zinc finger region" description="CCHC-type 1" evidence="3">
    <location>
        <begin position="544"/>
        <end position="561"/>
    </location>
</feature>
<feature type="zinc finger region" description="CCHC-type 2" evidence="3">
    <location>
        <begin position="580"/>
        <end position="597"/>
    </location>
</feature>
<feature type="region of interest" description="Disordered" evidence="4">
    <location>
        <begin position="165"/>
        <end position="189"/>
    </location>
</feature>
<feature type="region of interest" description="Disordered" evidence="4">
    <location>
        <begin position="217"/>
        <end position="264"/>
    </location>
</feature>
<feature type="region of interest" description="Disordered" evidence="4">
    <location>
        <begin position="598"/>
        <end position="641"/>
    </location>
</feature>
<feature type="compositionally biased region" description="Pro residues" evidence="4">
    <location>
        <begin position="232"/>
        <end position="247"/>
    </location>
</feature>
<feature type="compositionally biased region" description="Polar residues" evidence="4">
    <location>
        <begin position="604"/>
        <end position="622"/>
    </location>
</feature>
<feature type="compositionally biased region" description="Low complexity" evidence="4">
    <location>
        <begin position="624"/>
        <end position="640"/>
    </location>
</feature>
<feature type="lipid moiety-binding region" description="N-myristoyl glycine" evidence="2">
    <location>
        <position position="2"/>
    </location>
</feature>